<protein>
    <recommendedName>
        <fullName evidence="1">Large ribosomal subunit protein bL27</fullName>
    </recommendedName>
    <alternativeName>
        <fullName evidence="2">50S ribosomal protein L27</fullName>
    </alternativeName>
</protein>
<evidence type="ECO:0000255" key="1">
    <source>
        <dbReference type="HAMAP-Rule" id="MF_00539"/>
    </source>
</evidence>
<evidence type="ECO:0000305" key="2"/>
<reference key="1">
    <citation type="journal article" date="2009" name="PLoS Genet.">
        <title>Alliance of proteomics and genomics to unravel the specificities of Sahara bacterium Deinococcus deserti.</title>
        <authorList>
            <person name="de Groot A."/>
            <person name="Dulermo R."/>
            <person name="Ortet P."/>
            <person name="Blanchard L."/>
            <person name="Guerin P."/>
            <person name="Fernandez B."/>
            <person name="Vacherie B."/>
            <person name="Dossat C."/>
            <person name="Jolivet E."/>
            <person name="Siguier P."/>
            <person name="Chandler M."/>
            <person name="Barakat M."/>
            <person name="Dedieu A."/>
            <person name="Barbe V."/>
            <person name="Heulin T."/>
            <person name="Sommer S."/>
            <person name="Achouak W."/>
            <person name="Armengaud J."/>
        </authorList>
    </citation>
    <scope>NUCLEOTIDE SEQUENCE [LARGE SCALE GENOMIC DNA]</scope>
    <source>
        <strain>DSM 17065 / CIP 109153 / LMG 22923 / VCD115</strain>
    </source>
</reference>
<keyword id="KW-1185">Reference proteome</keyword>
<keyword id="KW-0687">Ribonucleoprotein</keyword>
<keyword id="KW-0689">Ribosomal protein</keyword>
<dbReference type="EMBL" id="CP001114">
    <property type="protein sequence ID" value="ACO47248.1"/>
    <property type="molecule type" value="Genomic_DNA"/>
</dbReference>
<dbReference type="RefSeq" id="WP_012694369.1">
    <property type="nucleotide sequence ID" value="NC_012526.1"/>
</dbReference>
<dbReference type="SMR" id="C1CZK0"/>
<dbReference type="STRING" id="546414.Deide_22190"/>
<dbReference type="PaxDb" id="546414-Deide_22190"/>
<dbReference type="KEGG" id="ddr:Deide_22190"/>
<dbReference type="eggNOG" id="COG0211">
    <property type="taxonomic scope" value="Bacteria"/>
</dbReference>
<dbReference type="HOGENOM" id="CLU_095424_4_0_0"/>
<dbReference type="OrthoDB" id="9803474at2"/>
<dbReference type="Proteomes" id="UP000002208">
    <property type="component" value="Chromosome"/>
</dbReference>
<dbReference type="GO" id="GO:0022625">
    <property type="term" value="C:cytosolic large ribosomal subunit"/>
    <property type="evidence" value="ECO:0007669"/>
    <property type="project" value="TreeGrafter"/>
</dbReference>
<dbReference type="GO" id="GO:0003735">
    <property type="term" value="F:structural constituent of ribosome"/>
    <property type="evidence" value="ECO:0007669"/>
    <property type="project" value="InterPro"/>
</dbReference>
<dbReference type="GO" id="GO:0006412">
    <property type="term" value="P:translation"/>
    <property type="evidence" value="ECO:0007669"/>
    <property type="project" value="UniProtKB-UniRule"/>
</dbReference>
<dbReference type="FunFam" id="2.40.50.100:FF:000060">
    <property type="entry name" value="Apicoplast ribosomal protein L27"/>
    <property type="match status" value="1"/>
</dbReference>
<dbReference type="Gene3D" id="2.40.50.100">
    <property type="match status" value="1"/>
</dbReference>
<dbReference type="HAMAP" id="MF_00539">
    <property type="entry name" value="Ribosomal_bL27"/>
    <property type="match status" value="1"/>
</dbReference>
<dbReference type="InterPro" id="IPR001684">
    <property type="entry name" value="Ribosomal_bL27"/>
</dbReference>
<dbReference type="InterPro" id="IPR018261">
    <property type="entry name" value="Ribosomal_bL27_CS"/>
</dbReference>
<dbReference type="NCBIfam" id="TIGR00062">
    <property type="entry name" value="L27"/>
    <property type="match status" value="1"/>
</dbReference>
<dbReference type="PANTHER" id="PTHR15893:SF0">
    <property type="entry name" value="LARGE RIBOSOMAL SUBUNIT PROTEIN BL27M"/>
    <property type="match status" value="1"/>
</dbReference>
<dbReference type="PANTHER" id="PTHR15893">
    <property type="entry name" value="RIBOSOMAL PROTEIN L27"/>
    <property type="match status" value="1"/>
</dbReference>
<dbReference type="Pfam" id="PF01016">
    <property type="entry name" value="Ribosomal_L27"/>
    <property type="match status" value="1"/>
</dbReference>
<dbReference type="PRINTS" id="PR00063">
    <property type="entry name" value="RIBOSOMALL27"/>
</dbReference>
<dbReference type="SUPFAM" id="SSF110324">
    <property type="entry name" value="Ribosomal L27 protein-like"/>
    <property type="match status" value="1"/>
</dbReference>
<dbReference type="PROSITE" id="PS00831">
    <property type="entry name" value="RIBOSOMAL_L27"/>
    <property type="match status" value="1"/>
</dbReference>
<comment type="similarity">
    <text evidence="1">Belongs to the bacterial ribosomal protein bL27 family.</text>
</comment>
<organism>
    <name type="scientific">Deinococcus deserti (strain DSM 17065 / CIP 109153 / LMG 22923 / VCD115)</name>
    <dbReference type="NCBI Taxonomy" id="546414"/>
    <lineage>
        <taxon>Bacteria</taxon>
        <taxon>Thermotogati</taxon>
        <taxon>Deinococcota</taxon>
        <taxon>Deinococci</taxon>
        <taxon>Deinococcales</taxon>
        <taxon>Deinococcaceae</taxon>
        <taxon>Deinococcus</taxon>
    </lineage>
</organism>
<sequence>MAHKKGVGSSKNGRDSNPKYLGVKKFGGEQVLAGNILVRQRGTKFKAGANVGMGRDHTLFALEHGKVVFTNKGNKGRFISIEVAQTEVAAD</sequence>
<proteinExistence type="inferred from homology"/>
<accession>C1CZK0</accession>
<feature type="chain" id="PRO_1000211921" description="Large ribosomal subunit protein bL27">
    <location>
        <begin position="1"/>
        <end position="91"/>
    </location>
</feature>
<gene>
    <name evidence="1" type="primary">rpmA</name>
    <name type="ordered locus">Deide_22190</name>
</gene>
<name>RL27_DEIDV</name>